<proteinExistence type="inferred from homology"/>
<comment type="function">
    <text evidence="1">Functions in the biosynthesis of branched-chain amino acids. Catalyzes the dehydration of (2R,3R)-2,3-dihydroxy-3-methylpentanoate (2,3-dihydroxy-3-methylvalerate) into 2-oxo-3-methylpentanoate (2-oxo-3-methylvalerate) and of (2R)-2,3-dihydroxy-3-methylbutanoate (2,3-dihydroxyisovalerate) into 2-oxo-3-methylbutanoate (2-oxoisovalerate), the penultimate precursor to L-isoleucine and L-valine, respectively.</text>
</comment>
<comment type="catalytic activity">
    <reaction evidence="1">
        <text>(2R)-2,3-dihydroxy-3-methylbutanoate = 3-methyl-2-oxobutanoate + H2O</text>
        <dbReference type="Rhea" id="RHEA:24809"/>
        <dbReference type="ChEBI" id="CHEBI:11851"/>
        <dbReference type="ChEBI" id="CHEBI:15377"/>
        <dbReference type="ChEBI" id="CHEBI:49072"/>
        <dbReference type="EC" id="4.2.1.9"/>
    </reaction>
    <physiologicalReaction direction="left-to-right" evidence="1">
        <dbReference type="Rhea" id="RHEA:24810"/>
    </physiologicalReaction>
</comment>
<comment type="catalytic activity">
    <reaction evidence="1">
        <text>(2R,3R)-2,3-dihydroxy-3-methylpentanoate = (S)-3-methyl-2-oxopentanoate + H2O</text>
        <dbReference type="Rhea" id="RHEA:27694"/>
        <dbReference type="ChEBI" id="CHEBI:15377"/>
        <dbReference type="ChEBI" id="CHEBI:35146"/>
        <dbReference type="ChEBI" id="CHEBI:49258"/>
        <dbReference type="EC" id="4.2.1.9"/>
    </reaction>
    <physiologicalReaction direction="left-to-right" evidence="1">
        <dbReference type="Rhea" id="RHEA:27695"/>
    </physiologicalReaction>
</comment>
<comment type="cofactor">
    <cofactor evidence="1">
        <name>[2Fe-2S] cluster</name>
        <dbReference type="ChEBI" id="CHEBI:190135"/>
    </cofactor>
    <text evidence="1">Binds 1 [2Fe-2S] cluster per subunit. This cluster acts as a Lewis acid cofactor.</text>
</comment>
<comment type="cofactor">
    <cofactor evidence="1">
        <name>Mg(2+)</name>
        <dbReference type="ChEBI" id="CHEBI:18420"/>
    </cofactor>
</comment>
<comment type="pathway">
    <text evidence="1">Amino-acid biosynthesis; L-isoleucine biosynthesis; L-isoleucine from 2-oxobutanoate: step 3/4.</text>
</comment>
<comment type="pathway">
    <text evidence="1">Amino-acid biosynthesis; L-valine biosynthesis; L-valine from pyruvate: step 3/4.</text>
</comment>
<comment type="subunit">
    <text evidence="1">Homodimer.</text>
</comment>
<comment type="similarity">
    <text evidence="1">Belongs to the IlvD/Edd family.</text>
</comment>
<protein>
    <recommendedName>
        <fullName evidence="1">Dihydroxy-acid dehydratase</fullName>
        <shortName evidence="1">DAD</shortName>
        <ecNumber evidence="1">4.2.1.9</ecNumber>
    </recommendedName>
</protein>
<name>ILVD_XYLFT</name>
<accession>Q87F63</accession>
<sequence>MPEYRSKTSTYGRNMAGARALWRATGMKDDDFQKPIIAIANSFTQFVPGHVHLKDLGQLVAREIERLGGVAKEFNTIAVDDGIAMGHDGMLYSLPSREIIADSVEYMANAHCADALVCISNCDKITPGMLMASLRLNIPTVFVSGGPMEAGKTTLADHKLDLVDAMVLAADPHASDEEVATVERSACPTCGSCSGMFTANSMNCLTEALGLSLPGNGTVVATHSDRKQLFLNAGRTVIELCHRWYGAEDATALPRGIATFAAFENAITLDIAMGGSTNTILHLLAAAQEAEVSFTMQDIDRLSRNVPQLCKVAPNTQKYHIEDVHRAGGIFGILAELARGNLLHTDVATVHSKTLGEAIATWDIIGTQDEAVHTFYKAGSAGIPTQVAFSQSTRWPSLDTDRTEGCIRDMEHAFSKEGGLAVLYGNIAQDGCVVKTAGVDASIHVFEGSALVYESQEAAVKGILSDEVQPGMIVVIRYEGPKGGPGMQEMLYPTSYLKSKGLGKQCALFTDGRFSGGTSGLSIGHASPEAAAGGAIGLIRDGDRIRIDIPQRAINVLISEEELASRRLEQHAIGWKPAQSRTRKVSSALKAYALLATSADKGAVRNKTLL</sequence>
<reference key="1">
    <citation type="journal article" date="2003" name="J. Bacteriol.">
        <title>Comparative analyses of the complete genome sequences of Pierce's disease and citrus variegated chlorosis strains of Xylella fastidiosa.</title>
        <authorList>
            <person name="Van Sluys M.A."/>
            <person name="de Oliveira M.C."/>
            <person name="Monteiro-Vitorello C.B."/>
            <person name="Miyaki C.Y."/>
            <person name="Furlan L.R."/>
            <person name="Camargo L.E.A."/>
            <person name="da Silva A.C.R."/>
            <person name="Moon D.H."/>
            <person name="Takita M.A."/>
            <person name="Lemos E.G.M."/>
            <person name="Machado M.A."/>
            <person name="Ferro M.I.T."/>
            <person name="da Silva F.R."/>
            <person name="Goldman M.H.S."/>
            <person name="Goldman G.H."/>
            <person name="Lemos M.V.F."/>
            <person name="El-Dorry H."/>
            <person name="Tsai S.M."/>
            <person name="Carrer H."/>
            <person name="Carraro D.M."/>
            <person name="de Oliveira R.C."/>
            <person name="Nunes L.R."/>
            <person name="Siqueira W.J."/>
            <person name="Coutinho L.L."/>
            <person name="Kimura E.T."/>
            <person name="Ferro E.S."/>
            <person name="Harakava R."/>
            <person name="Kuramae E.E."/>
            <person name="Marino C.L."/>
            <person name="Giglioti E."/>
            <person name="Abreu I.L."/>
            <person name="Alves L.M.C."/>
            <person name="do Amaral A.M."/>
            <person name="Baia G.S."/>
            <person name="Blanco S.R."/>
            <person name="Brito M.S."/>
            <person name="Cannavan F.S."/>
            <person name="Celestino A.V."/>
            <person name="da Cunha A.F."/>
            <person name="Fenille R.C."/>
            <person name="Ferro J.A."/>
            <person name="Formighieri E.F."/>
            <person name="Kishi L.T."/>
            <person name="Leoni S.G."/>
            <person name="Oliveira A.R."/>
            <person name="Rosa V.E. Jr."/>
            <person name="Sassaki F.T."/>
            <person name="Sena J.A.D."/>
            <person name="de Souza A.A."/>
            <person name="Truffi D."/>
            <person name="Tsukumo F."/>
            <person name="Yanai G.M."/>
            <person name="Zaros L.G."/>
            <person name="Civerolo E.L."/>
            <person name="Simpson A.J.G."/>
            <person name="Almeida N.F. Jr."/>
            <person name="Setubal J.C."/>
            <person name="Kitajima J.P."/>
        </authorList>
    </citation>
    <scope>NUCLEOTIDE SEQUENCE [LARGE SCALE GENOMIC DNA]</scope>
    <source>
        <strain>Temecula1 / ATCC 700964</strain>
    </source>
</reference>
<organism>
    <name type="scientific">Xylella fastidiosa (strain Temecula1 / ATCC 700964)</name>
    <dbReference type="NCBI Taxonomy" id="183190"/>
    <lineage>
        <taxon>Bacteria</taxon>
        <taxon>Pseudomonadati</taxon>
        <taxon>Pseudomonadota</taxon>
        <taxon>Gammaproteobacteria</taxon>
        <taxon>Lysobacterales</taxon>
        <taxon>Lysobacteraceae</taxon>
        <taxon>Xylella</taxon>
    </lineage>
</organism>
<gene>
    <name evidence="1" type="primary">ilvD</name>
    <name type="ordered locus">PD_0074</name>
</gene>
<evidence type="ECO:0000255" key="1">
    <source>
        <dbReference type="HAMAP-Rule" id="MF_00012"/>
    </source>
</evidence>
<keyword id="KW-0001">2Fe-2S</keyword>
<keyword id="KW-0028">Amino-acid biosynthesis</keyword>
<keyword id="KW-0100">Branched-chain amino acid biosynthesis</keyword>
<keyword id="KW-0408">Iron</keyword>
<keyword id="KW-0411">Iron-sulfur</keyword>
<keyword id="KW-0456">Lyase</keyword>
<keyword id="KW-0460">Magnesium</keyword>
<keyword id="KW-0479">Metal-binding</keyword>
<keyword id="KW-1185">Reference proteome</keyword>
<dbReference type="EC" id="4.2.1.9" evidence="1"/>
<dbReference type="EMBL" id="AE009442">
    <property type="protein sequence ID" value="AAO27974.1"/>
    <property type="molecule type" value="Genomic_DNA"/>
</dbReference>
<dbReference type="RefSeq" id="WP_004087662.1">
    <property type="nucleotide sequence ID" value="NC_004556.1"/>
</dbReference>
<dbReference type="SMR" id="Q87F63"/>
<dbReference type="GeneID" id="93903765"/>
<dbReference type="KEGG" id="xft:PD_0074"/>
<dbReference type="HOGENOM" id="CLU_014271_4_2_6"/>
<dbReference type="UniPathway" id="UPA00047">
    <property type="reaction ID" value="UER00057"/>
</dbReference>
<dbReference type="UniPathway" id="UPA00049">
    <property type="reaction ID" value="UER00061"/>
</dbReference>
<dbReference type="Proteomes" id="UP000002516">
    <property type="component" value="Chromosome"/>
</dbReference>
<dbReference type="GO" id="GO:0005829">
    <property type="term" value="C:cytosol"/>
    <property type="evidence" value="ECO:0007669"/>
    <property type="project" value="TreeGrafter"/>
</dbReference>
<dbReference type="GO" id="GO:0051537">
    <property type="term" value="F:2 iron, 2 sulfur cluster binding"/>
    <property type="evidence" value="ECO:0007669"/>
    <property type="project" value="UniProtKB-UniRule"/>
</dbReference>
<dbReference type="GO" id="GO:0004160">
    <property type="term" value="F:dihydroxy-acid dehydratase activity"/>
    <property type="evidence" value="ECO:0007669"/>
    <property type="project" value="UniProtKB-UniRule"/>
</dbReference>
<dbReference type="GO" id="GO:0000287">
    <property type="term" value="F:magnesium ion binding"/>
    <property type="evidence" value="ECO:0007669"/>
    <property type="project" value="UniProtKB-UniRule"/>
</dbReference>
<dbReference type="GO" id="GO:0009097">
    <property type="term" value="P:isoleucine biosynthetic process"/>
    <property type="evidence" value="ECO:0007669"/>
    <property type="project" value="UniProtKB-UniRule"/>
</dbReference>
<dbReference type="GO" id="GO:0009099">
    <property type="term" value="P:L-valine biosynthetic process"/>
    <property type="evidence" value="ECO:0007669"/>
    <property type="project" value="UniProtKB-UniRule"/>
</dbReference>
<dbReference type="FunFam" id="3.50.30.80:FF:000001">
    <property type="entry name" value="Dihydroxy-acid dehydratase"/>
    <property type="match status" value="1"/>
</dbReference>
<dbReference type="Gene3D" id="3.50.30.80">
    <property type="entry name" value="IlvD/EDD C-terminal domain-like"/>
    <property type="match status" value="1"/>
</dbReference>
<dbReference type="HAMAP" id="MF_00012">
    <property type="entry name" value="IlvD"/>
    <property type="match status" value="1"/>
</dbReference>
<dbReference type="InterPro" id="IPR042096">
    <property type="entry name" value="Dihydro-acid_dehy_C"/>
</dbReference>
<dbReference type="InterPro" id="IPR004404">
    <property type="entry name" value="DihydroxyA_deHydtase"/>
</dbReference>
<dbReference type="InterPro" id="IPR020558">
    <property type="entry name" value="DiOHA_6PGluconate_deHydtase_CS"/>
</dbReference>
<dbReference type="InterPro" id="IPR056740">
    <property type="entry name" value="ILV_EDD_C"/>
</dbReference>
<dbReference type="InterPro" id="IPR000581">
    <property type="entry name" value="ILV_EDD_N"/>
</dbReference>
<dbReference type="InterPro" id="IPR037237">
    <property type="entry name" value="IlvD/EDD_N"/>
</dbReference>
<dbReference type="NCBIfam" id="TIGR00110">
    <property type="entry name" value="ilvD"/>
    <property type="match status" value="1"/>
</dbReference>
<dbReference type="NCBIfam" id="NF009103">
    <property type="entry name" value="PRK12448.1"/>
    <property type="match status" value="1"/>
</dbReference>
<dbReference type="PANTHER" id="PTHR43661">
    <property type="entry name" value="D-XYLONATE DEHYDRATASE"/>
    <property type="match status" value="1"/>
</dbReference>
<dbReference type="PANTHER" id="PTHR43661:SF3">
    <property type="entry name" value="D-XYLONATE DEHYDRATASE YAGF-RELATED"/>
    <property type="match status" value="1"/>
</dbReference>
<dbReference type="Pfam" id="PF24877">
    <property type="entry name" value="ILV_EDD_C"/>
    <property type="match status" value="1"/>
</dbReference>
<dbReference type="Pfam" id="PF00920">
    <property type="entry name" value="ILVD_EDD_N"/>
    <property type="match status" value="1"/>
</dbReference>
<dbReference type="SUPFAM" id="SSF143975">
    <property type="entry name" value="IlvD/EDD N-terminal domain-like"/>
    <property type="match status" value="1"/>
</dbReference>
<dbReference type="SUPFAM" id="SSF52016">
    <property type="entry name" value="LeuD/IlvD-like"/>
    <property type="match status" value="1"/>
</dbReference>
<dbReference type="PROSITE" id="PS00886">
    <property type="entry name" value="ILVD_EDD_1"/>
    <property type="match status" value="1"/>
</dbReference>
<dbReference type="PROSITE" id="PS00887">
    <property type="entry name" value="ILVD_EDD_2"/>
    <property type="match status" value="1"/>
</dbReference>
<feature type="chain" id="PRO_0000103534" description="Dihydroxy-acid dehydratase">
    <location>
        <begin position="1"/>
        <end position="610"/>
    </location>
</feature>
<feature type="active site" description="Proton acceptor" evidence="1">
    <location>
        <position position="515"/>
    </location>
</feature>
<feature type="binding site" evidence="1">
    <location>
        <position position="81"/>
    </location>
    <ligand>
        <name>Mg(2+)</name>
        <dbReference type="ChEBI" id="CHEBI:18420"/>
    </ligand>
</feature>
<feature type="binding site" evidence="1">
    <location>
        <position position="122"/>
    </location>
    <ligand>
        <name>[2Fe-2S] cluster</name>
        <dbReference type="ChEBI" id="CHEBI:190135"/>
    </ligand>
</feature>
<feature type="binding site" evidence="1">
    <location>
        <position position="123"/>
    </location>
    <ligand>
        <name>Mg(2+)</name>
        <dbReference type="ChEBI" id="CHEBI:18420"/>
    </ligand>
</feature>
<feature type="binding site" description="via carbamate group" evidence="1">
    <location>
        <position position="124"/>
    </location>
    <ligand>
        <name>Mg(2+)</name>
        <dbReference type="ChEBI" id="CHEBI:18420"/>
    </ligand>
</feature>
<feature type="binding site" evidence="1">
    <location>
        <position position="193"/>
    </location>
    <ligand>
        <name>[2Fe-2S] cluster</name>
        <dbReference type="ChEBI" id="CHEBI:190135"/>
    </ligand>
</feature>
<feature type="binding site" evidence="1">
    <location>
        <position position="489"/>
    </location>
    <ligand>
        <name>Mg(2+)</name>
        <dbReference type="ChEBI" id="CHEBI:18420"/>
    </ligand>
</feature>
<feature type="modified residue" description="N6-carboxylysine" evidence="1">
    <location>
        <position position="124"/>
    </location>
</feature>